<reference key="1">
    <citation type="journal article" date="2010" name="Genome Biol. Evol.">
        <title>Continuing evolution of Burkholderia mallei through genome reduction and large-scale rearrangements.</title>
        <authorList>
            <person name="Losada L."/>
            <person name="Ronning C.M."/>
            <person name="DeShazer D."/>
            <person name="Woods D."/>
            <person name="Fedorova N."/>
            <person name="Kim H.S."/>
            <person name="Shabalina S.A."/>
            <person name="Pearson T.R."/>
            <person name="Brinkac L."/>
            <person name="Tan P."/>
            <person name="Nandi T."/>
            <person name="Crabtree J."/>
            <person name="Badger J."/>
            <person name="Beckstrom-Sternberg S."/>
            <person name="Saqib M."/>
            <person name="Schutzer S.E."/>
            <person name="Keim P."/>
            <person name="Nierman W.C."/>
        </authorList>
    </citation>
    <scope>NUCLEOTIDE SEQUENCE [LARGE SCALE GENOMIC DNA]</scope>
    <source>
        <strain>668</strain>
    </source>
</reference>
<organism>
    <name type="scientific">Burkholderia pseudomallei (strain 668)</name>
    <dbReference type="NCBI Taxonomy" id="320373"/>
    <lineage>
        <taxon>Bacteria</taxon>
        <taxon>Pseudomonadati</taxon>
        <taxon>Pseudomonadota</taxon>
        <taxon>Betaproteobacteria</taxon>
        <taxon>Burkholderiales</taxon>
        <taxon>Burkholderiaceae</taxon>
        <taxon>Burkholderia</taxon>
        <taxon>pseudomallei group</taxon>
    </lineage>
</organism>
<feature type="chain" id="PRO_1000019634" description="Serine--tRNA ligase">
    <location>
        <begin position="1"/>
        <end position="433"/>
    </location>
</feature>
<feature type="binding site" evidence="1">
    <location>
        <begin position="235"/>
        <end position="237"/>
    </location>
    <ligand>
        <name>L-serine</name>
        <dbReference type="ChEBI" id="CHEBI:33384"/>
    </ligand>
</feature>
<feature type="binding site" evidence="1">
    <location>
        <begin position="266"/>
        <end position="268"/>
    </location>
    <ligand>
        <name>ATP</name>
        <dbReference type="ChEBI" id="CHEBI:30616"/>
    </ligand>
</feature>
<feature type="binding site" evidence="1">
    <location>
        <position position="289"/>
    </location>
    <ligand>
        <name>L-serine</name>
        <dbReference type="ChEBI" id="CHEBI:33384"/>
    </ligand>
</feature>
<feature type="binding site" evidence="1">
    <location>
        <begin position="353"/>
        <end position="356"/>
    </location>
    <ligand>
        <name>ATP</name>
        <dbReference type="ChEBI" id="CHEBI:30616"/>
    </ligand>
</feature>
<feature type="binding site" evidence="1">
    <location>
        <position position="388"/>
    </location>
    <ligand>
        <name>L-serine</name>
        <dbReference type="ChEBI" id="CHEBI:33384"/>
    </ligand>
</feature>
<comment type="function">
    <text evidence="1">Catalyzes the attachment of serine to tRNA(Ser). Is also able to aminoacylate tRNA(Sec) with serine, to form the misacylated tRNA L-seryl-tRNA(Sec), which will be further converted into selenocysteinyl-tRNA(Sec).</text>
</comment>
<comment type="catalytic activity">
    <reaction evidence="1">
        <text>tRNA(Ser) + L-serine + ATP = L-seryl-tRNA(Ser) + AMP + diphosphate + H(+)</text>
        <dbReference type="Rhea" id="RHEA:12292"/>
        <dbReference type="Rhea" id="RHEA-COMP:9669"/>
        <dbReference type="Rhea" id="RHEA-COMP:9703"/>
        <dbReference type="ChEBI" id="CHEBI:15378"/>
        <dbReference type="ChEBI" id="CHEBI:30616"/>
        <dbReference type="ChEBI" id="CHEBI:33019"/>
        <dbReference type="ChEBI" id="CHEBI:33384"/>
        <dbReference type="ChEBI" id="CHEBI:78442"/>
        <dbReference type="ChEBI" id="CHEBI:78533"/>
        <dbReference type="ChEBI" id="CHEBI:456215"/>
        <dbReference type="EC" id="6.1.1.11"/>
    </reaction>
</comment>
<comment type="catalytic activity">
    <reaction evidence="1">
        <text>tRNA(Sec) + L-serine + ATP = L-seryl-tRNA(Sec) + AMP + diphosphate + H(+)</text>
        <dbReference type="Rhea" id="RHEA:42580"/>
        <dbReference type="Rhea" id="RHEA-COMP:9742"/>
        <dbReference type="Rhea" id="RHEA-COMP:10128"/>
        <dbReference type="ChEBI" id="CHEBI:15378"/>
        <dbReference type="ChEBI" id="CHEBI:30616"/>
        <dbReference type="ChEBI" id="CHEBI:33019"/>
        <dbReference type="ChEBI" id="CHEBI:33384"/>
        <dbReference type="ChEBI" id="CHEBI:78442"/>
        <dbReference type="ChEBI" id="CHEBI:78533"/>
        <dbReference type="ChEBI" id="CHEBI:456215"/>
        <dbReference type="EC" id="6.1.1.11"/>
    </reaction>
</comment>
<comment type="pathway">
    <text evidence="1">Aminoacyl-tRNA biosynthesis; selenocysteinyl-tRNA(Sec) biosynthesis; L-seryl-tRNA(Sec) from L-serine and tRNA(Sec): step 1/1.</text>
</comment>
<comment type="subunit">
    <text evidence="1">Homodimer. The tRNA molecule binds across the dimer.</text>
</comment>
<comment type="subcellular location">
    <subcellularLocation>
        <location evidence="1">Cytoplasm</location>
    </subcellularLocation>
</comment>
<comment type="domain">
    <text evidence="1">Consists of two distinct domains, a catalytic core and a N-terminal extension that is involved in tRNA binding.</text>
</comment>
<comment type="similarity">
    <text evidence="1">Belongs to the class-II aminoacyl-tRNA synthetase family. Type-1 seryl-tRNA synthetase subfamily.</text>
</comment>
<proteinExistence type="inferred from homology"/>
<name>SYS_BURP6</name>
<accession>A3NCC8</accession>
<keyword id="KW-0030">Aminoacyl-tRNA synthetase</keyword>
<keyword id="KW-0067">ATP-binding</keyword>
<keyword id="KW-0963">Cytoplasm</keyword>
<keyword id="KW-0436">Ligase</keyword>
<keyword id="KW-0547">Nucleotide-binding</keyword>
<keyword id="KW-0648">Protein biosynthesis</keyword>
<evidence type="ECO:0000255" key="1">
    <source>
        <dbReference type="HAMAP-Rule" id="MF_00176"/>
    </source>
</evidence>
<dbReference type="EC" id="6.1.1.11" evidence="1"/>
<dbReference type="EMBL" id="CP000570">
    <property type="protein sequence ID" value="ABN83239.1"/>
    <property type="molecule type" value="Genomic_DNA"/>
</dbReference>
<dbReference type="RefSeq" id="WP_004538636.1">
    <property type="nucleotide sequence ID" value="NC_009074.1"/>
</dbReference>
<dbReference type="SMR" id="A3NCC8"/>
<dbReference type="KEGG" id="bpd:BURPS668_2986"/>
<dbReference type="HOGENOM" id="CLU_023797_1_1_4"/>
<dbReference type="UniPathway" id="UPA00906">
    <property type="reaction ID" value="UER00895"/>
</dbReference>
<dbReference type="GO" id="GO:0005737">
    <property type="term" value="C:cytoplasm"/>
    <property type="evidence" value="ECO:0007669"/>
    <property type="project" value="UniProtKB-SubCell"/>
</dbReference>
<dbReference type="GO" id="GO:0005524">
    <property type="term" value="F:ATP binding"/>
    <property type="evidence" value="ECO:0007669"/>
    <property type="project" value="UniProtKB-UniRule"/>
</dbReference>
<dbReference type="GO" id="GO:0004828">
    <property type="term" value="F:serine-tRNA ligase activity"/>
    <property type="evidence" value="ECO:0007669"/>
    <property type="project" value="UniProtKB-UniRule"/>
</dbReference>
<dbReference type="GO" id="GO:0016260">
    <property type="term" value="P:selenocysteine biosynthetic process"/>
    <property type="evidence" value="ECO:0007669"/>
    <property type="project" value="UniProtKB-UniRule"/>
</dbReference>
<dbReference type="GO" id="GO:0006434">
    <property type="term" value="P:seryl-tRNA aminoacylation"/>
    <property type="evidence" value="ECO:0007669"/>
    <property type="project" value="UniProtKB-UniRule"/>
</dbReference>
<dbReference type="CDD" id="cd00770">
    <property type="entry name" value="SerRS_core"/>
    <property type="match status" value="1"/>
</dbReference>
<dbReference type="Gene3D" id="3.30.930.10">
    <property type="entry name" value="Bira Bifunctional Protein, Domain 2"/>
    <property type="match status" value="1"/>
</dbReference>
<dbReference type="Gene3D" id="1.10.287.40">
    <property type="entry name" value="Serine-tRNA synthetase, tRNA binding domain"/>
    <property type="match status" value="1"/>
</dbReference>
<dbReference type="HAMAP" id="MF_00176">
    <property type="entry name" value="Ser_tRNA_synth_type1"/>
    <property type="match status" value="1"/>
</dbReference>
<dbReference type="InterPro" id="IPR002314">
    <property type="entry name" value="aa-tRNA-synt_IIb"/>
</dbReference>
<dbReference type="InterPro" id="IPR006195">
    <property type="entry name" value="aa-tRNA-synth_II"/>
</dbReference>
<dbReference type="InterPro" id="IPR045864">
    <property type="entry name" value="aa-tRNA-synth_II/BPL/LPL"/>
</dbReference>
<dbReference type="InterPro" id="IPR002317">
    <property type="entry name" value="Ser-tRNA-ligase_type_1"/>
</dbReference>
<dbReference type="InterPro" id="IPR015866">
    <property type="entry name" value="Ser-tRNA-synth_1_N"/>
</dbReference>
<dbReference type="InterPro" id="IPR042103">
    <property type="entry name" value="SerRS_1_N_sf"/>
</dbReference>
<dbReference type="InterPro" id="IPR033729">
    <property type="entry name" value="SerRS_core"/>
</dbReference>
<dbReference type="InterPro" id="IPR010978">
    <property type="entry name" value="tRNA-bd_arm"/>
</dbReference>
<dbReference type="NCBIfam" id="TIGR00414">
    <property type="entry name" value="serS"/>
    <property type="match status" value="1"/>
</dbReference>
<dbReference type="PANTHER" id="PTHR43697:SF1">
    <property type="entry name" value="SERINE--TRNA LIGASE"/>
    <property type="match status" value="1"/>
</dbReference>
<dbReference type="PANTHER" id="PTHR43697">
    <property type="entry name" value="SERYL-TRNA SYNTHETASE"/>
    <property type="match status" value="1"/>
</dbReference>
<dbReference type="Pfam" id="PF02403">
    <property type="entry name" value="Seryl_tRNA_N"/>
    <property type="match status" value="1"/>
</dbReference>
<dbReference type="Pfam" id="PF00587">
    <property type="entry name" value="tRNA-synt_2b"/>
    <property type="match status" value="1"/>
</dbReference>
<dbReference type="PIRSF" id="PIRSF001529">
    <property type="entry name" value="Ser-tRNA-synth_IIa"/>
    <property type="match status" value="1"/>
</dbReference>
<dbReference type="PRINTS" id="PR00981">
    <property type="entry name" value="TRNASYNTHSER"/>
</dbReference>
<dbReference type="SUPFAM" id="SSF55681">
    <property type="entry name" value="Class II aaRS and biotin synthetases"/>
    <property type="match status" value="1"/>
</dbReference>
<dbReference type="SUPFAM" id="SSF46589">
    <property type="entry name" value="tRNA-binding arm"/>
    <property type="match status" value="1"/>
</dbReference>
<dbReference type="PROSITE" id="PS50862">
    <property type="entry name" value="AA_TRNA_LIGASE_II"/>
    <property type="match status" value="1"/>
</dbReference>
<sequence>MLDIQLLRKDLDGVAKRLADRGYPLDVAAFSALEAERRAIQTRTEELQARRNSLSKQIGAMKGRGEDTSAVMAEVGGIGDEMKASAVKLDEIQARLSELMLEMPNVPHESVPVGRDETENVEVRRWGAPRQFDFDVKDHVDVGTPLGLDFETGAKLSGARFTVLRGPIARLHRALAQFMLDTHTQQHGYSETYTPYIVNPDVLYGTGQLPKFAEDMFRVEKGGAENTVTQYLISTSEISLTNTVRDSIIEASALPIKLTAHSPCFRSEAGSYGRDTRGMIRQHQFDKVEMVQIVAPEASYAALDEMVGHAEAILQKLELPYRVVALCTGDMGFSAAKTFDLEVWLPAQNTYREISSCSNTESFQARRMQARFRNAQGKPELVHTLNGSGLAVGRTLVAVLENYQNADGSVTVPVALRPYMGGVERIDAPSSAA</sequence>
<protein>
    <recommendedName>
        <fullName evidence="1">Serine--tRNA ligase</fullName>
        <ecNumber evidence="1">6.1.1.11</ecNumber>
    </recommendedName>
    <alternativeName>
        <fullName evidence="1">Seryl-tRNA synthetase</fullName>
        <shortName evidence="1">SerRS</shortName>
    </alternativeName>
    <alternativeName>
        <fullName evidence="1">Seryl-tRNA(Ser/Sec) synthetase</fullName>
    </alternativeName>
</protein>
<gene>
    <name evidence="1" type="primary">serS</name>
    <name type="ordered locus">BURPS668_2986</name>
</gene>